<feature type="signal peptide" evidence="2">
    <location>
        <begin position="1"/>
        <end position="14"/>
    </location>
</feature>
<feature type="chain" id="PRO_0000025527" description="Peptidyl-prolyl cis-trans isomerase Mip">
    <location>
        <begin position="15"/>
        <end position="243"/>
    </location>
</feature>
<feature type="domain" description="PPIase FKBP-type" evidence="3">
    <location>
        <begin position="152"/>
        <end position="235"/>
    </location>
</feature>
<dbReference type="EC" id="5.2.1.8"/>
<dbReference type="EMBL" id="AE002160">
    <property type="protein sequence ID" value="AAF39628.1"/>
    <property type="status" value="ALT_INIT"/>
    <property type="molecule type" value="Genomic_DNA"/>
</dbReference>
<dbReference type="PIR" id="D81660">
    <property type="entry name" value="D81660"/>
</dbReference>
<dbReference type="RefSeq" id="WP_010231699.1">
    <property type="nucleotide sequence ID" value="NZ_CP063055.1"/>
</dbReference>
<dbReference type="SMR" id="Q9PJK1"/>
<dbReference type="GeneID" id="1246196"/>
<dbReference type="KEGG" id="cmu:TC_0828"/>
<dbReference type="eggNOG" id="COG0545">
    <property type="taxonomic scope" value="Bacteria"/>
</dbReference>
<dbReference type="HOGENOM" id="CLU_013615_0_1_0"/>
<dbReference type="OrthoDB" id="9814548at2"/>
<dbReference type="Proteomes" id="UP000000800">
    <property type="component" value="Chromosome"/>
</dbReference>
<dbReference type="GO" id="GO:0009279">
    <property type="term" value="C:cell outer membrane"/>
    <property type="evidence" value="ECO:0007669"/>
    <property type="project" value="UniProtKB-SubCell"/>
</dbReference>
<dbReference type="GO" id="GO:0003755">
    <property type="term" value="F:peptidyl-prolyl cis-trans isomerase activity"/>
    <property type="evidence" value="ECO:0007669"/>
    <property type="project" value="UniProtKB-KW"/>
</dbReference>
<dbReference type="GO" id="GO:0006457">
    <property type="term" value="P:protein folding"/>
    <property type="evidence" value="ECO:0007669"/>
    <property type="project" value="InterPro"/>
</dbReference>
<dbReference type="FunFam" id="3.10.50.40:FF:000060">
    <property type="entry name" value="Peptidyl-prolyl cis-trans isomerase"/>
    <property type="match status" value="1"/>
</dbReference>
<dbReference type="Gene3D" id="3.10.50.40">
    <property type="match status" value="1"/>
</dbReference>
<dbReference type="Gene3D" id="1.10.287.460">
    <property type="entry name" value="Peptidyl-prolyl cis-trans isomerase, FKBP-type, N-terminal domain"/>
    <property type="match status" value="1"/>
</dbReference>
<dbReference type="InterPro" id="IPR046357">
    <property type="entry name" value="PPIase_dom_sf"/>
</dbReference>
<dbReference type="InterPro" id="IPR001179">
    <property type="entry name" value="PPIase_FKBP_dom"/>
</dbReference>
<dbReference type="InterPro" id="IPR000774">
    <property type="entry name" value="PPIase_FKBP_N"/>
</dbReference>
<dbReference type="InterPro" id="IPR036944">
    <property type="entry name" value="PPIase_FKBP_N_sf"/>
</dbReference>
<dbReference type="PANTHER" id="PTHR43811:SF19">
    <property type="entry name" value="39 KDA FK506-BINDING NUCLEAR PROTEIN"/>
    <property type="match status" value="1"/>
</dbReference>
<dbReference type="PANTHER" id="PTHR43811">
    <property type="entry name" value="FKBP-TYPE PEPTIDYL-PROLYL CIS-TRANS ISOMERASE FKPA"/>
    <property type="match status" value="1"/>
</dbReference>
<dbReference type="Pfam" id="PF00254">
    <property type="entry name" value="FKBP_C"/>
    <property type="match status" value="1"/>
</dbReference>
<dbReference type="Pfam" id="PF01346">
    <property type="entry name" value="FKBP_N"/>
    <property type="match status" value="1"/>
</dbReference>
<dbReference type="SUPFAM" id="SSF54534">
    <property type="entry name" value="FKBP-like"/>
    <property type="match status" value="1"/>
</dbReference>
<dbReference type="PROSITE" id="PS50059">
    <property type="entry name" value="FKBP_PPIASE"/>
    <property type="match status" value="1"/>
</dbReference>
<comment type="function">
    <text>PPIases accelerate the folding of proteins.</text>
</comment>
<comment type="catalytic activity">
    <reaction>
        <text>[protein]-peptidylproline (omega=180) = [protein]-peptidylproline (omega=0)</text>
        <dbReference type="Rhea" id="RHEA:16237"/>
        <dbReference type="Rhea" id="RHEA-COMP:10747"/>
        <dbReference type="Rhea" id="RHEA-COMP:10748"/>
        <dbReference type="ChEBI" id="CHEBI:83833"/>
        <dbReference type="ChEBI" id="CHEBI:83834"/>
        <dbReference type="EC" id="5.2.1.8"/>
    </reaction>
</comment>
<comment type="subcellular location">
    <subcellularLocation>
        <location evidence="1">Cell outer membrane</location>
        <topology evidence="1">Peripheral membrane protein</topology>
    </subcellularLocation>
</comment>
<comment type="similarity">
    <text evidence="4">Belongs to the FKBP-type PPIase family.</text>
</comment>
<comment type="sequence caution" evidence="4">
    <conflict type="erroneous initiation">
        <sequence resource="EMBL-CDS" id="AAF39628"/>
    </conflict>
</comment>
<protein>
    <recommendedName>
        <fullName>Peptidyl-prolyl cis-trans isomerase Mip</fullName>
        <shortName>PPIase</shortName>
        <ecNumber>5.2.1.8</ecNumber>
    </recommendedName>
    <alternativeName>
        <fullName>Rotamase</fullName>
    </alternativeName>
</protein>
<reference key="1">
    <citation type="journal article" date="2000" name="Nucleic Acids Res.">
        <title>Genome sequences of Chlamydia trachomatis MoPn and Chlamydia pneumoniae AR39.</title>
        <authorList>
            <person name="Read T.D."/>
            <person name="Brunham R.C."/>
            <person name="Shen C."/>
            <person name="Gill S.R."/>
            <person name="Heidelberg J.F."/>
            <person name="White O."/>
            <person name="Hickey E.K."/>
            <person name="Peterson J.D."/>
            <person name="Utterback T.R."/>
            <person name="Berry K.J."/>
            <person name="Bass S."/>
            <person name="Linher K.D."/>
            <person name="Weidman J.F."/>
            <person name="Khouri H.M."/>
            <person name="Craven B."/>
            <person name="Bowman C."/>
            <person name="Dodson R.J."/>
            <person name="Gwinn M.L."/>
            <person name="Nelson W.C."/>
            <person name="DeBoy R.T."/>
            <person name="Kolonay J.F."/>
            <person name="McClarty G."/>
            <person name="Salzberg S.L."/>
            <person name="Eisen J.A."/>
            <person name="Fraser C.M."/>
        </authorList>
    </citation>
    <scope>NUCLEOTIDE SEQUENCE [LARGE SCALE GENOMIC DNA]</scope>
    <source>
        <strain>MoPn / Nigg</strain>
    </source>
</reference>
<organism>
    <name type="scientific">Chlamydia muridarum (strain MoPn / Nigg)</name>
    <dbReference type="NCBI Taxonomy" id="243161"/>
    <lineage>
        <taxon>Bacteria</taxon>
        <taxon>Pseudomonadati</taxon>
        <taxon>Chlamydiota</taxon>
        <taxon>Chlamydiia</taxon>
        <taxon>Chlamydiales</taxon>
        <taxon>Chlamydiaceae</taxon>
        <taxon>Chlamydia/Chlamydophila group</taxon>
        <taxon>Chlamydia</taxon>
    </lineage>
</organism>
<accession>Q9PJK1</accession>
<proteinExistence type="inferred from homology"/>
<evidence type="ECO:0000250" key="1"/>
<evidence type="ECO:0000255" key="2"/>
<evidence type="ECO:0000255" key="3">
    <source>
        <dbReference type="PROSITE-ProRule" id="PRU00277"/>
    </source>
</evidence>
<evidence type="ECO:0000305" key="4"/>
<gene>
    <name type="primary">mip</name>
    <name type="ordered locus">TC_0828</name>
</gene>
<name>MIP_CHLMU</name>
<sequence>MKNILSWMLMFAVALPILGCDNNGGSQTSAMGKDMVEDSVLTDNQKLSRTFGHLLARQLSSTEDFTLDLTEVIKGMQSEIEGKSAPLTDSEYETQMALVQKASFEKKCSENLASAEKFLKENKDKEGVIELEPNKLQYRIVKEGTGRVLTGKPNALLHYTGSFINGKVFDTSEKNKDPILLPLTKVISGFSQGMQGMREGEVRVLYIHPDLAYGTSGQLPPNSLLIFEVKLIEANDDNVSVAE</sequence>
<keyword id="KW-0998">Cell outer membrane</keyword>
<keyword id="KW-0413">Isomerase</keyword>
<keyword id="KW-0472">Membrane</keyword>
<keyword id="KW-0697">Rotamase</keyword>
<keyword id="KW-0732">Signal</keyword>